<comment type="function">
    <text evidence="1">RNA-binding component of the eukaryotic translation initiation factor 3 (eIF-3) complex, which is involved in protein synthesis of a specialized repertoire of mRNAs and, together with other initiation factors, stimulates binding of mRNA and methionyl-tRNAi to the 40S ribosome. The eIF-3 complex specifically targets and initiates translation of a subset of mRNAs involved in cell proliferation. This subunit can bind 18S rRNA.</text>
</comment>
<comment type="subunit">
    <text evidence="1">Component of the eukaryotic translation initiation factor 3 (eIF-3) complex.</text>
</comment>
<comment type="subcellular location">
    <subcellularLocation>
        <location evidence="1">Cytoplasm</location>
    </subcellularLocation>
</comment>
<comment type="similarity">
    <text evidence="1">Belongs to the eIF-3 subunit G family.</text>
</comment>
<organism>
    <name type="scientific">Anopheles gambiae</name>
    <name type="common">African malaria mosquito</name>
    <dbReference type="NCBI Taxonomy" id="7165"/>
    <lineage>
        <taxon>Eukaryota</taxon>
        <taxon>Metazoa</taxon>
        <taxon>Ecdysozoa</taxon>
        <taxon>Arthropoda</taxon>
        <taxon>Hexapoda</taxon>
        <taxon>Insecta</taxon>
        <taxon>Pterygota</taxon>
        <taxon>Neoptera</taxon>
        <taxon>Endopterygota</taxon>
        <taxon>Diptera</taxon>
        <taxon>Nematocera</taxon>
        <taxon>Culicoidea</taxon>
        <taxon>Culicidae</taxon>
        <taxon>Anophelinae</taxon>
        <taxon>Anopheles</taxon>
    </lineage>
</organism>
<name>EIF3G_ANOGA</name>
<protein>
    <recommendedName>
        <fullName evidence="1">Eukaryotic translation initiation factor 3 subunit G</fullName>
        <shortName evidence="1">eIF3g</shortName>
    </recommendedName>
    <alternativeName>
        <fullName evidence="1">Eukaryotic translation initiation factor 3 RNA-binding subunit</fullName>
        <shortName evidence="1">eIF-3 RNA-binding subunit</shortName>
    </alternativeName>
    <alternativeName>
        <fullName evidence="1">Eukaryotic translation initiation factor 3 subunit 4</fullName>
    </alternativeName>
</protein>
<feature type="chain" id="PRO_0000365404" description="Eukaryotic translation initiation factor 3 subunit G">
    <location>
        <begin position="1"/>
        <end position="271"/>
    </location>
</feature>
<feature type="domain" description="RRM" evidence="1">
    <location>
        <begin position="189"/>
        <end position="267"/>
    </location>
</feature>
<feature type="region of interest" description="Disordered" evidence="2">
    <location>
        <begin position="1"/>
        <end position="29"/>
    </location>
</feature>
<feature type="region of interest" description="Disordered" evidence="2">
    <location>
        <begin position="143"/>
        <end position="185"/>
    </location>
</feature>
<accession>Q7QJV0</accession>
<evidence type="ECO:0000255" key="1">
    <source>
        <dbReference type="HAMAP-Rule" id="MF_03006"/>
    </source>
</evidence>
<evidence type="ECO:0000256" key="2">
    <source>
        <dbReference type="SAM" id="MobiDB-lite"/>
    </source>
</evidence>
<proteinExistence type="inferred from homology"/>
<keyword id="KW-0963">Cytoplasm</keyword>
<keyword id="KW-0396">Initiation factor</keyword>
<keyword id="KW-0648">Protein biosynthesis</keyword>
<keyword id="KW-1185">Reference proteome</keyword>
<keyword id="KW-0694">RNA-binding</keyword>
<sequence length="271" mass="30295">MPALDDIKSSWADEVESDSGSLPPPSEVIENGQKIVTEYKYNKDDKKVKVVRTYKISRVVVPKCVARRKSLAKFGDSATDRPGPNPQTTMVSEDVFMQFITNKEEEQKNENALDSMKNIVKCRTCEGEHWSFHCPYKNSAYDKPTKPTTAPVPETTSSSKPGKYVPPHMKESQGKPGIGGAMRGRDDTSAIRISNLSEAMTEADLEELVKKFGPHTKMFLSRDKSTGLCKGFAYVHFRSRRDAATAIEVLNGYGYDHLILSVEWSKPQNPQ</sequence>
<dbReference type="EMBL" id="AAAB01008807">
    <property type="protein sequence ID" value="EAA04126.3"/>
    <property type="molecule type" value="Genomic_DNA"/>
</dbReference>
<dbReference type="SMR" id="Q7QJV0"/>
<dbReference type="FunCoup" id="Q7QJV0">
    <property type="interactions" value="1828"/>
</dbReference>
<dbReference type="STRING" id="7165.Q7QJV0"/>
<dbReference type="PaxDb" id="7165-AGAP007668-PA"/>
<dbReference type="EnsemblMetazoa" id="AGAP007668-RA">
    <property type="protein sequence ID" value="AGAP007668-PA"/>
    <property type="gene ID" value="AGAP007668"/>
</dbReference>
<dbReference type="GeneID" id="1269559"/>
<dbReference type="KEGG" id="aga:1269559"/>
<dbReference type="CTD" id="31243"/>
<dbReference type="VEuPathDB" id="VectorBase:AGAMI1_005021"/>
<dbReference type="VEuPathDB" id="VectorBase:AGAP007668"/>
<dbReference type="eggNOG" id="KOG0122">
    <property type="taxonomic scope" value="Eukaryota"/>
</dbReference>
<dbReference type="HOGENOM" id="CLU_034595_0_0_1"/>
<dbReference type="InParanoid" id="Q7QJV0"/>
<dbReference type="OMA" id="ICQGDHF"/>
<dbReference type="PhylomeDB" id="Q7QJV0"/>
<dbReference type="Proteomes" id="UP000007062">
    <property type="component" value="Chromosome 2L"/>
</dbReference>
<dbReference type="GO" id="GO:0016282">
    <property type="term" value="C:eukaryotic 43S preinitiation complex"/>
    <property type="evidence" value="ECO:0007669"/>
    <property type="project" value="UniProtKB-UniRule"/>
</dbReference>
<dbReference type="GO" id="GO:0033290">
    <property type="term" value="C:eukaryotic 48S preinitiation complex"/>
    <property type="evidence" value="ECO:0007669"/>
    <property type="project" value="UniProtKB-UniRule"/>
</dbReference>
<dbReference type="GO" id="GO:0005852">
    <property type="term" value="C:eukaryotic translation initiation factor 3 complex"/>
    <property type="evidence" value="ECO:0007669"/>
    <property type="project" value="UniProtKB-UniRule"/>
</dbReference>
<dbReference type="GO" id="GO:0003723">
    <property type="term" value="F:RNA binding"/>
    <property type="evidence" value="ECO:0007669"/>
    <property type="project" value="UniProtKB-UniRule"/>
</dbReference>
<dbReference type="GO" id="GO:0003743">
    <property type="term" value="F:translation initiation factor activity"/>
    <property type="evidence" value="ECO:0007669"/>
    <property type="project" value="UniProtKB-UniRule"/>
</dbReference>
<dbReference type="GO" id="GO:0001732">
    <property type="term" value="P:formation of cytoplasmic translation initiation complex"/>
    <property type="evidence" value="ECO:0007669"/>
    <property type="project" value="UniProtKB-UniRule"/>
</dbReference>
<dbReference type="CDD" id="cd12933">
    <property type="entry name" value="eIF3G"/>
    <property type="match status" value="1"/>
</dbReference>
<dbReference type="CDD" id="cd12408">
    <property type="entry name" value="RRM_eIF3G_like"/>
    <property type="match status" value="1"/>
</dbReference>
<dbReference type="FunFam" id="3.30.70.330:FF:000828">
    <property type="entry name" value="Eukaryotic translation initiation factor 3 subunit G"/>
    <property type="match status" value="1"/>
</dbReference>
<dbReference type="Gene3D" id="3.30.70.330">
    <property type="match status" value="1"/>
</dbReference>
<dbReference type="HAMAP" id="MF_03006">
    <property type="entry name" value="eIF3g"/>
    <property type="match status" value="1"/>
</dbReference>
<dbReference type="InterPro" id="IPR017334">
    <property type="entry name" value="eIF3_g"/>
</dbReference>
<dbReference type="InterPro" id="IPR024675">
    <property type="entry name" value="eIF3g_N"/>
</dbReference>
<dbReference type="InterPro" id="IPR034240">
    <property type="entry name" value="eIF3G_RRM"/>
</dbReference>
<dbReference type="InterPro" id="IPR012677">
    <property type="entry name" value="Nucleotide-bd_a/b_plait_sf"/>
</dbReference>
<dbReference type="InterPro" id="IPR035979">
    <property type="entry name" value="RBD_domain_sf"/>
</dbReference>
<dbReference type="InterPro" id="IPR000504">
    <property type="entry name" value="RRM_dom"/>
</dbReference>
<dbReference type="PANTHER" id="PTHR10352">
    <property type="entry name" value="EUKARYOTIC TRANSLATION INITIATION FACTOR 3 SUBUNIT G"/>
    <property type="match status" value="1"/>
</dbReference>
<dbReference type="Pfam" id="PF12353">
    <property type="entry name" value="eIF3g"/>
    <property type="match status" value="1"/>
</dbReference>
<dbReference type="Pfam" id="PF00076">
    <property type="entry name" value="RRM_1"/>
    <property type="match status" value="1"/>
</dbReference>
<dbReference type="PIRSF" id="PIRSF037949">
    <property type="entry name" value="Transl_init_eIF-3_RNA-bind"/>
    <property type="match status" value="1"/>
</dbReference>
<dbReference type="SMART" id="SM00360">
    <property type="entry name" value="RRM"/>
    <property type="match status" value="1"/>
</dbReference>
<dbReference type="SUPFAM" id="SSF54928">
    <property type="entry name" value="RNA-binding domain, RBD"/>
    <property type="match status" value="1"/>
</dbReference>
<dbReference type="PROSITE" id="PS50102">
    <property type="entry name" value="RRM"/>
    <property type="match status" value="1"/>
</dbReference>
<reference key="1">
    <citation type="journal article" date="2002" name="Science">
        <title>The genome sequence of the malaria mosquito Anopheles gambiae.</title>
        <authorList>
            <person name="Holt R.A."/>
            <person name="Subramanian G.M."/>
            <person name="Halpern A."/>
            <person name="Sutton G.G."/>
            <person name="Charlab R."/>
            <person name="Nusskern D.R."/>
            <person name="Wincker P."/>
            <person name="Clark A.G."/>
            <person name="Ribeiro J.M.C."/>
            <person name="Wides R."/>
            <person name="Salzberg S.L."/>
            <person name="Loftus B.J."/>
            <person name="Yandell M.D."/>
            <person name="Majoros W.H."/>
            <person name="Rusch D.B."/>
            <person name="Lai Z."/>
            <person name="Kraft C.L."/>
            <person name="Abril J.F."/>
            <person name="Anthouard V."/>
            <person name="Arensburger P."/>
            <person name="Atkinson P.W."/>
            <person name="Baden H."/>
            <person name="de Berardinis V."/>
            <person name="Baldwin D."/>
            <person name="Benes V."/>
            <person name="Biedler J."/>
            <person name="Blass C."/>
            <person name="Bolanos R."/>
            <person name="Boscus D."/>
            <person name="Barnstead M."/>
            <person name="Cai S."/>
            <person name="Center A."/>
            <person name="Chaturverdi K."/>
            <person name="Christophides G.K."/>
            <person name="Chrystal M.A.M."/>
            <person name="Clamp M."/>
            <person name="Cravchik A."/>
            <person name="Curwen V."/>
            <person name="Dana A."/>
            <person name="Delcher A."/>
            <person name="Dew I."/>
            <person name="Evans C.A."/>
            <person name="Flanigan M."/>
            <person name="Grundschober-Freimoser A."/>
            <person name="Friedli L."/>
            <person name="Gu Z."/>
            <person name="Guan P."/>
            <person name="Guigo R."/>
            <person name="Hillenmeyer M.E."/>
            <person name="Hladun S.L."/>
            <person name="Hogan J.R."/>
            <person name="Hong Y.S."/>
            <person name="Hoover J."/>
            <person name="Jaillon O."/>
            <person name="Ke Z."/>
            <person name="Kodira C.D."/>
            <person name="Kokoza E."/>
            <person name="Koutsos A."/>
            <person name="Letunic I."/>
            <person name="Levitsky A.A."/>
            <person name="Liang Y."/>
            <person name="Lin J.-J."/>
            <person name="Lobo N.F."/>
            <person name="Lopez J.R."/>
            <person name="Malek J.A."/>
            <person name="McIntosh T.C."/>
            <person name="Meister S."/>
            <person name="Miller J.R."/>
            <person name="Mobarry C."/>
            <person name="Mongin E."/>
            <person name="Murphy S.D."/>
            <person name="O'Brochta D.A."/>
            <person name="Pfannkoch C."/>
            <person name="Qi R."/>
            <person name="Regier M.A."/>
            <person name="Remington K."/>
            <person name="Shao H."/>
            <person name="Sharakhova M.V."/>
            <person name="Sitter C.D."/>
            <person name="Shetty J."/>
            <person name="Smith T.J."/>
            <person name="Strong R."/>
            <person name="Sun J."/>
            <person name="Thomasova D."/>
            <person name="Ton L.Q."/>
            <person name="Topalis P."/>
            <person name="Tu Z.J."/>
            <person name="Unger M.F."/>
            <person name="Walenz B."/>
            <person name="Wang A.H."/>
            <person name="Wang J."/>
            <person name="Wang M."/>
            <person name="Wang X."/>
            <person name="Woodford K.J."/>
            <person name="Wortman J.R."/>
            <person name="Wu M."/>
            <person name="Yao A."/>
            <person name="Zdobnov E.M."/>
            <person name="Zhang H."/>
            <person name="Zhao Q."/>
            <person name="Zhao S."/>
            <person name="Zhu S.C."/>
            <person name="Zhimulev I."/>
            <person name="Coluzzi M."/>
            <person name="della Torre A."/>
            <person name="Roth C.W."/>
            <person name="Louis C."/>
            <person name="Kalush F."/>
            <person name="Mural R.J."/>
            <person name="Myers E.W."/>
            <person name="Adams M.D."/>
            <person name="Smith H.O."/>
            <person name="Broder S."/>
            <person name="Gardner M.J."/>
            <person name="Fraser C.M."/>
            <person name="Birney E."/>
            <person name="Bork P."/>
            <person name="Brey P.T."/>
            <person name="Venter J.C."/>
            <person name="Weissenbach J."/>
            <person name="Kafatos F.C."/>
            <person name="Collins F.H."/>
            <person name="Hoffman S.L."/>
        </authorList>
    </citation>
    <scope>NUCLEOTIDE SEQUENCE [LARGE SCALE GENOMIC DNA]</scope>
    <source>
        <strain>PEST</strain>
    </source>
</reference>
<gene>
    <name evidence="1" type="primary">eIF3-S4</name>
    <name type="ORF">AGAP007668</name>
</gene>